<comment type="function">
    <text evidence="2">Catalyzes the formation of N(7)-methylguanine at position 46 (m7G46) in tRNA.</text>
</comment>
<comment type="catalytic activity">
    <reaction evidence="2">
        <text>guanosine(46) in tRNA + S-adenosyl-L-methionine = N(7)-methylguanosine(46) in tRNA + S-adenosyl-L-homocysteine</text>
        <dbReference type="Rhea" id="RHEA:42708"/>
        <dbReference type="Rhea" id="RHEA-COMP:10188"/>
        <dbReference type="Rhea" id="RHEA-COMP:10189"/>
        <dbReference type="ChEBI" id="CHEBI:57856"/>
        <dbReference type="ChEBI" id="CHEBI:59789"/>
        <dbReference type="ChEBI" id="CHEBI:74269"/>
        <dbReference type="ChEBI" id="CHEBI:74480"/>
        <dbReference type="EC" id="2.1.1.33"/>
    </reaction>
</comment>
<comment type="pathway">
    <text evidence="2">tRNA modification; N(7)-methylguanine-tRNA biosynthesis.</text>
</comment>
<comment type="similarity">
    <text evidence="2">Belongs to the class I-like SAM-binding methyltransferase superfamily. TrmB family.</text>
</comment>
<evidence type="ECO:0000250" key="1"/>
<evidence type="ECO:0000255" key="2">
    <source>
        <dbReference type="HAMAP-Rule" id="MF_01057"/>
    </source>
</evidence>
<feature type="chain" id="PRO_0000171291" description="tRNA (guanine-N(7)-)-methyltransferase">
    <location>
        <begin position="1"/>
        <end position="217"/>
    </location>
</feature>
<feature type="active site" evidence="1">
    <location>
        <position position="118"/>
    </location>
</feature>
<feature type="binding site" evidence="2">
    <location>
        <position position="44"/>
    </location>
    <ligand>
        <name>S-adenosyl-L-methionine</name>
        <dbReference type="ChEBI" id="CHEBI:59789"/>
    </ligand>
</feature>
<feature type="binding site" evidence="2">
    <location>
        <position position="69"/>
    </location>
    <ligand>
        <name>S-adenosyl-L-methionine</name>
        <dbReference type="ChEBI" id="CHEBI:59789"/>
    </ligand>
</feature>
<feature type="binding site" evidence="2">
    <location>
        <position position="96"/>
    </location>
    <ligand>
        <name>S-adenosyl-L-methionine</name>
        <dbReference type="ChEBI" id="CHEBI:59789"/>
    </ligand>
</feature>
<feature type="binding site" evidence="2">
    <location>
        <position position="118"/>
    </location>
    <ligand>
        <name>S-adenosyl-L-methionine</name>
        <dbReference type="ChEBI" id="CHEBI:59789"/>
    </ligand>
</feature>
<feature type="binding site" evidence="2">
    <location>
        <position position="122"/>
    </location>
    <ligand>
        <name>substrate</name>
    </ligand>
</feature>
<feature type="binding site" evidence="2">
    <location>
        <position position="154"/>
    </location>
    <ligand>
        <name>substrate</name>
    </ligand>
</feature>
<feature type="binding site" evidence="2">
    <location>
        <begin position="191"/>
        <end position="194"/>
    </location>
    <ligand>
        <name>substrate</name>
    </ligand>
</feature>
<proteinExistence type="inferred from homology"/>
<sequence>MRLRHKPYAMDRINEYSHIVIGNPEERAGNWKEVFGNEQPIHIEVGTGRGRFMYDMAKANPHINYIGIEKFTSVVVDALDKLIEEELPNLKLINKDAEDLTVFFAKGEIDRVYLNFSDPWPKKRHTKRRLTYKTFLRNYEEVLVEGGEIHFKTDNQGLFEYSLMSMAEYGMLLTYLSLDLHNSDFEGNIMTEYEEKFSSKGHRIYRVEAKYRTEPMQ</sequence>
<gene>
    <name evidence="2" type="primary">trmB</name>
    <name type="ordered locus">BCE33L4449</name>
</gene>
<name>TRMB_BACCZ</name>
<accession>Q632Z1</accession>
<keyword id="KW-0489">Methyltransferase</keyword>
<keyword id="KW-0949">S-adenosyl-L-methionine</keyword>
<keyword id="KW-0808">Transferase</keyword>
<keyword id="KW-0819">tRNA processing</keyword>
<dbReference type="EC" id="2.1.1.33" evidence="2"/>
<dbReference type="EMBL" id="CP000001">
    <property type="protein sequence ID" value="AAU15821.1"/>
    <property type="molecule type" value="Genomic_DNA"/>
</dbReference>
<dbReference type="RefSeq" id="WP_001239380.1">
    <property type="nucleotide sequence ID" value="NZ_CP009968.1"/>
</dbReference>
<dbReference type="SMR" id="Q632Z1"/>
<dbReference type="GeneID" id="75087864"/>
<dbReference type="KEGG" id="bcz:BCE33L4449"/>
<dbReference type="PATRIC" id="fig|288681.22.peg.920"/>
<dbReference type="UniPathway" id="UPA00989"/>
<dbReference type="Proteomes" id="UP000002612">
    <property type="component" value="Chromosome"/>
</dbReference>
<dbReference type="GO" id="GO:0043527">
    <property type="term" value="C:tRNA methyltransferase complex"/>
    <property type="evidence" value="ECO:0007669"/>
    <property type="project" value="TreeGrafter"/>
</dbReference>
<dbReference type="GO" id="GO:0008176">
    <property type="term" value="F:tRNA (guanine(46)-N7)-methyltransferase activity"/>
    <property type="evidence" value="ECO:0007669"/>
    <property type="project" value="UniProtKB-UniRule"/>
</dbReference>
<dbReference type="CDD" id="cd02440">
    <property type="entry name" value="AdoMet_MTases"/>
    <property type="match status" value="1"/>
</dbReference>
<dbReference type="FunFam" id="3.40.50.150:FF:000035">
    <property type="entry name" value="tRNA (guanine-N(7)-)-methyltransferase"/>
    <property type="match status" value="1"/>
</dbReference>
<dbReference type="Gene3D" id="3.40.50.150">
    <property type="entry name" value="Vaccinia Virus protein VP39"/>
    <property type="match status" value="1"/>
</dbReference>
<dbReference type="HAMAP" id="MF_01057">
    <property type="entry name" value="tRNA_methyltr_TrmB"/>
    <property type="match status" value="1"/>
</dbReference>
<dbReference type="InterPro" id="IPR029063">
    <property type="entry name" value="SAM-dependent_MTases_sf"/>
</dbReference>
<dbReference type="InterPro" id="IPR003358">
    <property type="entry name" value="tRNA_(Gua-N-7)_MeTrfase_Trmb"/>
</dbReference>
<dbReference type="InterPro" id="IPR055361">
    <property type="entry name" value="tRNA_methyltr_TrmB_bact"/>
</dbReference>
<dbReference type="NCBIfam" id="NF001080">
    <property type="entry name" value="PRK00121.2-2"/>
    <property type="match status" value="1"/>
</dbReference>
<dbReference type="NCBIfam" id="TIGR00091">
    <property type="entry name" value="tRNA (guanosine(46)-N7)-methyltransferase TrmB"/>
    <property type="match status" value="1"/>
</dbReference>
<dbReference type="PANTHER" id="PTHR23417">
    <property type="entry name" value="3-DEOXY-D-MANNO-OCTULOSONIC-ACID TRANSFERASE/TRNA GUANINE-N 7 - -METHYLTRANSFERASE"/>
    <property type="match status" value="1"/>
</dbReference>
<dbReference type="PANTHER" id="PTHR23417:SF14">
    <property type="entry name" value="PENTACOTRIPEPTIDE-REPEAT REGION OF PRORP DOMAIN-CONTAINING PROTEIN"/>
    <property type="match status" value="1"/>
</dbReference>
<dbReference type="Pfam" id="PF02390">
    <property type="entry name" value="Methyltransf_4"/>
    <property type="match status" value="1"/>
</dbReference>
<dbReference type="SUPFAM" id="SSF53335">
    <property type="entry name" value="S-adenosyl-L-methionine-dependent methyltransferases"/>
    <property type="match status" value="1"/>
</dbReference>
<dbReference type="PROSITE" id="PS51625">
    <property type="entry name" value="SAM_MT_TRMB"/>
    <property type="match status" value="1"/>
</dbReference>
<reference key="1">
    <citation type="journal article" date="2006" name="J. Bacteriol.">
        <title>Pathogenomic sequence analysis of Bacillus cereus and Bacillus thuringiensis isolates closely related to Bacillus anthracis.</title>
        <authorList>
            <person name="Han C.S."/>
            <person name="Xie G."/>
            <person name="Challacombe J.F."/>
            <person name="Altherr M.R."/>
            <person name="Bhotika S.S."/>
            <person name="Bruce D."/>
            <person name="Campbell C.S."/>
            <person name="Campbell M.L."/>
            <person name="Chen J."/>
            <person name="Chertkov O."/>
            <person name="Cleland C."/>
            <person name="Dimitrijevic M."/>
            <person name="Doggett N.A."/>
            <person name="Fawcett J.J."/>
            <person name="Glavina T."/>
            <person name="Goodwin L.A."/>
            <person name="Hill K.K."/>
            <person name="Hitchcock P."/>
            <person name="Jackson P.J."/>
            <person name="Keim P."/>
            <person name="Kewalramani A.R."/>
            <person name="Longmire J."/>
            <person name="Lucas S."/>
            <person name="Malfatti S."/>
            <person name="McMurry K."/>
            <person name="Meincke L.J."/>
            <person name="Misra M."/>
            <person name="Moseman B.L."/>
            <person name="Mundt M."/>
            <person name="Munk A.C."/>
            <person name="Okinaka R.T."/>
            <person name="Parson-Quintana B."/>
            <person name="Reilly L.P."/>
            <person name="Richardson P."/>
            <person name="Robinson D.L."/>
            <person name="Rubin E."/>
            <person name="Saunders E."/>
            <person name="Tapia R."/>
            <person name="Tesmer J.G."/>
            <person name="Thayer N."/>
            <person name="Thompson L.S."/>
            <person name="Tice H."/>
            <person name="Ticknor L.O."/>
            <person name="Wills P.L."/>
            <person name="Brettin T.S."/>
            <person name="Gilna P."/>
        </authorList>
    </citation>
    <scope>NUCLEOTIDE SEQUENCE [LARGE SCALE GENOMIC DNA]</scope>
    <source>
        <strain>ZK / E33L</strain>
    </source>
</reference>
<organism>
    <name type="scientific">Bacillus cereus (strain ZK / E33L)</name>
    <dbReference type="NCBI Taxonomy" id="288681"/>
    <lineage>
        <taxon>Bacteria</taxon>
        <taxon>Bacillati</taxon>
        <taxon>Bacillota</taxon>
        <taxon>Bacilli</taxon>
        <taxon>Bacillales</taxon>
        <taxon>Bacillaceae</taxon>
        <taxon>Bacillus</taxon>
        <taxon>Bacillus cereus group</taxon>
    </lineage>
</organism>
<protein>
    <recommendedName>
        <fullName evidence="2">tRNA (guanine-N(7)-)-methyltransferase</fullName>
        <ecNumber evidence="2">2.1.1.33</ecNumber>
    </recommendedName>
    <alternativeName>
        <fullName evidence="2">tRNA (guanine(46)-N(7))-methyltransferase</fullName>
    </alternativeName>
    <alternativeName>
        <fullName evidence="2">tRNA(m7G46)-methyltransferase</fullName>
    </alternativeName>
</protein>